<feature type="chain" id="PRO_1000023276" description="Thymidylate kinase">
    <location>
        <begin position="1"/>
        <end position="215"/>
    </location>
</feature>
<feature type="binding site" evidence="1">
    <location>
        <begin position="13"/>
        <end position="20"/>
    </location>
    <ligand>
        <name>ATP</name>
        <dbReference type="ChEBI" id="CHEBI:30616"/>
    </ligand>
</feature>
<protein>
    <recommendedName>
        <fullName evidence="1">Thymidylate kinase</fullName>
        <ecNumber evidence="1">2.7.4.9</ecNumber>
    </recommendedName>
    <alternativeName>
        <fullName evidence="1">dTMP kinase</fullName>
    </alternativeName>
</protein>
<proteinExistence type="inferred from homology"/>
<accession>Q081H9</accession>
<reference key="1">
    <citation type="submission" date="2006-08" db="EMBL/GenBank/DDBJ databases">
        <title>Complete sequence of Shewanella frigidimarina NCIMB 400.</title>
        <authorList>
            <consortium name="US DOE Joint Genome Institute"/>
            <person name="Copeland A."/>
            <person name="Lucas S."/>
            <person name="Lapidus A."/>
            <person name="Barry K."/>
            <person name="Detter J.C."/>
            <person name="Glavina del Rio T."/>
            <person name="Hammon N."/>
            <person name="Israni S."/>
            <person name="Dalin E."/>
            <person name="Tice H."/>
            <person name="Pitluck S."/>
            <person name="Fredrickson J.K."/>
            <person name="Kolker E."/>
            <person name="McCuel L.A."/>
            <person name="DiChristina T."/>
            <person name="Nealson K.H."/>
            <person name="Newman D."/>
            <person name="Tiedje J.M."/>
            <person name="Zhou J."/>
            <person name="Romine M.F."/>
            <person name="Culley D.E."/>
            <person name="Serres M."/>
            <person name="Chertkov O."/>
            <person name="Brettin T."/>
            <person name="Bruce D."/>
            <person name="Han C."/>
            <person name="Tapia R."/>
            <person name="Gilna P."/>
            <person name="Schmutz J."/>
            <person name="Larimer F."/>
            <person name="Land M."/>
            <person name="Hauser L."/>
            <person name="Kyrpides N."/>
            <person name="Mikhailova N."/>
            <person name="Richardson P."/>
        </authorList>
    </citation>
    <scope>NUCLEOTIDE SEQUENCE [LARGE SCALE GENOMIC DNA]</scope>
    <source>
        <strain>NCIMB 400</strain>
    </source>
</reference>
<comment type="function">
    <text evidence="1">Phosphorylation of dTMP to form dTDP in both de novo and salvage pathways of dTTP synthesis.</text>
</comment>
<comment type="catalytic activity">
    <reaction evidence="1">
        <text>dTMP + ATP = dTDP + ADP</text>
        <dbReference type="Rhea" id="RHEA:13517"/>
        <dbReference type="ChEBI" id="CHEBI:30616"/>
        <dbReference type="ChEBI" id="CHEBI:58369"/>
        <dbReference type="ChEBI" id="CHEBI:63528"/>
        <dbReference type="ChEBI" id="CHEBI:456216"/>
        <dbReference type="EC" id="2.7.4.9"/>
    </reaction>
</comment>
<comment type="similarity">
    <text evidence="1">Belongs to the thymidylate kinase family.</text>
</comment>
<sequence length="215" mass="23534">MSQQQGKFIVIEGLEGAGKSSAIALVNDIIKQHIGQAPVCTREPGGTPLAEKMRDLVKIADETDPLCDEAECLLIYAARTQLIANVIKPALSVGQWVLGDRHNLSSLAYQGGGRGLMPLVKAVSDACLRGFKPDLTLYLDIDPTLGLSRAASRGELDRIEQQAIDFFERARRTYLQLAHEDDSIVVIDASQSMEQVHNDIGIQLQRHLSTLMSEQ</sequence>
<organism>
    <name type="scientific">Shewanella frigidimarina (strain NCIMB 400)</name>
    <dbReference type="NCBI Taxonomy" id="318167"/>
    <lineage>
        <taxon>Bacteria</taxon>
        <taxon>Pseudomonadati</taxon>
        <taxon>Pseudomonadota</taxon>
        <taxon>Gammaproteobacteria</taxon>
        <taxon>Alteromonadales</taxon>
        <taxon>Shewanellaceae</taxon>
        <taxon>Shewanella</taxon>
    </lineage>
</organism>
<dbReference type="EC" id="2.7.4.9" evidence="1"/>
<dbReference type="EMBL" id="CP000447">
    <property type="protein sequence ID" value="ABI72086.1"/>
    <property type="molecule type" value="Genomic_DNA"/>
</dbReference>
<dbReference type="RefSeq" id="WP_011637696.1">
    <property type="nucleotide sequence ID" value="NC_008345.1"/>
</dbReference>
<dbReference type="SMR" id="Q081H9"/>
<dbReference type="STRING" id="318167.Sfri_2240"/>
<dbReference type="KEGG" id="sfr:Sfri_2240"/>
<dbReference type="eggNOG" id="COG0125">
    <property type="taxonomic scope" value="Bacteria"/>
</dbReference>
<dbReference type="HOGENOM" id="CLU_049131_0_1_6"/>
<dbReference type="OrthoDB" id="9774907at2"/>
<dbReference type="Proteomes" id="UP000000684">
    <property type="component" value="Chromosome"/>
</dbReference>
<dbReference type="GO" id="GO:0005829">
    <property type="term" value="C:cytosol"/>
    <property type="evidence" value="ECO:0007669"/>
    <property type="project" value="TreeGrafter"/>
</dbReference>
<dbReference type="GO" id="GO:0005524">
    <property type="term" value="F:ATP binding"/>
    <property type="evidence" value="ECO:0007669"/>
    <property type="project" value="UniProtKB-UniRule"/>
</dbReference>
<dbReference type="GO" id="GO:0004798">
    <property type="term" value="F:dTMP kinase activity"/>
    <property type="evidence" value="ECO:0007669"/>
    <property type="project" value="UniProtKB-UniRule"/>
</dbReference>
<dbReference type="GO" id="GO:0006233">
    <property type="term" value="P:dTDP biosynthetic process"/>
    <property type="evidence" value="ECO:0007669"/>
    <property type="project" value="InterPro"/>
</dbReference>
<dbReference type="GO" id="GO:0006235">
    <property type="term" value="P:dTTP biosynthetic process"/>
    <property type="evidence" value="ECO:0007669"/>
    <property type="project" value="UniProtKB-UniRule"/>
</dbReference>
<dbReference type="GO" id="GO:0006227">
    <property type="term" value="P:dUDP biosynthetic process"/>
    <property type="evidence" value="ECO:0007669"/>
    <property type="project" value="TreeGrafter"/>
</dbReference>
<dbReference type="CDD" id="cd01672">
    <property type="entry name" value="TMPK"/>
    <property type="match status" value="1"/>
</dbReference>
<dbReference type="FunFam" id="3.40.50.300:FF:000321">
    <property type="entry name" value="Thymidylate kinase"/>
    <property type="match status" value="1"/>
</dbReference>
<dbReference type="Gene3D" id="3.40.50.300">
    <property type="entry name" value="P-loop containing nucleotide triphosphate hydrolases"/>
    <property type="match status" value="1"/>
</dbReference>
<dbReference type="HAMAP" id="MF_00165">
    <property type="entry name" value="Thymidylate_kinase"/>
    <property type="match status" value="1"/>
</dbReference>
<dbReference type="InterPro" id="IPR027417">
    <property type="entry name" value="P-loop_NTPase"/>
</dbReference>
<dbReference type="InterPro" id="IPR039430">
    <property type="entry name" value="Thymidylate_kin-like_dom"/>
</dbReference>
<dbReference type="InterPro" id="IPR018095">
    <property type="entry name" value="Thymidylate_kin_CS"/>
</dbReference>
<dbReference type="InterPro" id="IPR018094">
    <property type="entry name" value="Thymidylate_kinase"/>
</dbReference>
<dbReference type="NCBIfam" id="TIGR00041">
    <property type="entry name" value="DTMP_kinase"/>
    <property type="match status" value="1"/>
</dbReference>
<dbReference type="PANTHER" id="PTHR10344">
    <property type="entry name" value="THYMIDYLATE KINASE"/>
    <property type="match status" value="1"/>
</dbReference>
<dbReference type="PANTHER" id="PTHR10344:SF4">
    <property type="entry name" value="UMP-CMP KINASE 2, MITOCHONDRIAL"/>
    <property type="match status" value="1"/>
</dbReference>
<dbReference type="Pfam" id="PF02223">
    <property type="entry name" value="Thymidylate_kin"/>
    <property type="match status" value="1"/>
</dbReference>
<dbReference type="SUPFAM" id="SSF52540">
    <property type="entry name" value="P-loop containing nucleoside triphosphate hydrolases"/>
    <property type="match status" value="1"/>
</dbReference>
<dbReference type="PROSITE" id="PS01331">
    <property type="entry name" value="THYMIDYLATE_KINASE"/>
    <property type="match status" value="1"/>
</dbReference>
<name>KTHY_SHEFN</name>
<gene>
    <name evidence="1" type="primary">tmk</name>
    <name type="ordered locus">Sfri_2240</name>
</gene>
<evidence type="ECO:0000255" key="1">
    <source>
        <dbReference type="HAMAP-Rule" id="MF_00165"/>
    </source>
</evidence>
<keyword id="KW-0067">ATP-binding</keyword>
<keyword id="KW-0418">Kinase</keyword>
<keyword id="KW-0545">Nucleotide biosynthesis</keyword>
<keyword id="KW-0547">Nucleotide-binding</keyword>
<keyword id="KW-1185">Reference proteome</keyword>
<keyword id="KW-0808">Transferase</keyword>